<keyword id="KW-0010">Activator</keyword>
<keyword id="KW-0539">Nucleus</keyword>
<keyword id="KW-1185">Reference proteome</keyword>
<keyword id="KW-0804">Transcription</keyword>
<keyword id="KW-0805">Transcription regulation</keyword>
<reference key="1">
    <citation type="journal article" date="2015" name="Genome Announc.">
        <title>Draft genome sequence of the cellulolytic fungus Chaetomium globosum.</title>
        <authorList>
            <person name="Cuomo C.A."/>
            <person name="Untereiner W.A."/>
            <person name="Ma L.-J."/>
            <person name="Grabherr M."/>
            <person name="Birren B.W."/>
        </authorList>
    </citation>
    <scope>NUCLEOTIDE SEQUENCE [LARGE SCALE GENOMIC DNA]</scope>
    <source>
        <strain>ATCC 6205 / CBS 148.51 / DSM 1962 / NBRC 6347 / NRRL 1970</strain>
    </source>
</reference>
<proteinExistence type="inferred from homology"/>
<accession>Q2HDU8</accession>
<organism>
    <name type="scientific">Chaetomium globosum (strain ATCC 6205 / CBS 148.51 / DSM 1962 / NBRC 6347 / NRRL 1970)</name>
    <name type="common">Soil fungus</name>
    <dbReference type="NCBI Taxonomy" id="306901"/>
    <lineage>
        <taxon>Eukaryota</taxon>
        <taxon>Fungi</taxon>
        <taxon>Dikarya</taxon>
        <taxon>Ascomycota</taxon>
        <taxon>Pezizomycotina</taxon>
        <taxon>Sordariomycetes</taxon>
        <taxon>Sordariomycetidae</taxon>
        <taxon>Sordariales</taxon>
        <taxon>Chaetomiaceae</taxon>
        <taxon>Chaetomium</taxon>
    </lineage>
</organism>
<evidence type="ECO:0000250" key="1"/>
<evidence type="ECO:0000256" key="2">
    <source>
        <dbReference type="SAM" id="MobiDB-lite"/>
    </source>
</evidence>
<evidence type="ECO:0000305" key="3"/>
<dbReference type="EMBL" id="CH408029">
    <property type="protein sequence ID" value="EAQ93371.1"/>
    <property type="molecule type" value="Genomic_DNA"/>
</dbReference>
<dbReference type="RefSeq" id="XP_001220827.1">
    <property type="nucleotide sequence ID" value="XM_001220826.1"/>
</dbReference>
<dbReference type="STRING" id="306901.Q2HDU8"/>
<dbReference type="GeneID" id="4386331"/>
<dbReference type="VEuPathDB" id="FungiDB:CHGG_01606"/>
<dbReference type="eggNOG" id="KOG1875">
    <property type="taxonomic scope" value="Eukaryota"/>
</dbReference>
<dbReference type="HOGENOM" id="CLU_003573_1_0_1"/>
<dbReference type="InParanoid" id="Q2HDU8"/>
<dbReference type="OMA" id="ITQGYIP"/>
<dbReference type="OrthoDB" id="205099at2759"/>
<dbReference type="Proteomes" id="UP000001056">
    <property type="component" value="Unassembled WGS sequence"/>
</dbReference>
<dbReference type="GO" id="GO:0070847">
    <property type="term" value="C:core mediator complex"/>
    <property type="evidence" value="ECO:0007669"/>
    <property type="project" value="TreeGrafter"/>
</dbReference>
<dbReference type="GO" id="GO:0016592">
    <property type="term" value="C:mediator complex"/>
    <property type="evidence" value="ECO:0007669"/>
    <property type="project" value="InterPro"/>
</dbReference>
<dbReference type="GO" id="GO:0003712">
    <property type="term" value="F:transcription coregulator activity"/>
    <property type="evidence" value="ECO:0007669"/>
    <property type="project" value="InterPro"/>
</dbReference>
<dbReference type="GO" id="GO:0006357">
    <property type="term" value="P:regulation of transcription by RNA polymerase II"/>
    <property type="evidence" value="ECO:0007669"/>
    <property type="project" value="InterPro"/>
</dbReference>
<dbReference type="InterPro" id="IPR055122">
    <property type="entry name" value="Med14_N"/>
</dbReference>
<dbReference type="InterPro" id="IPR013947">
    <property type="entry name" value="Mediator_Med14"/>
</dbReference>
<dbReference type="PANTHER" id="PTHR12809">
    <property type="entry name" value="MEDIATOR COMPLEX SUBUNIT"/>
    <property type="match status" value="1"/>
</dbReference>
<dbReference type="PANTHER" id="PTHR12809:SF2">
    <property type="entry name" value="MEDIATOR OF RNA POLYMERASE II TRANSCRIPTION SUBUNIT 14"/>
    <property type="match status" value="1"/>
</dbReference>
<dbReference type="Pfam" id="PF08638">
    <property type="entry name" value="Med14"/>
    <property type="match status" value="1"/>
</dbReference>
<name>MED14_CHAGB</name>
<gene>
    <name type="primary">RGR1</name>
    <name type="synonym">MED14</name>
    <name type="ORF">CHGG_01606</name>
</gene>
<feature type="chain" id="PRO_0000304599" description="Mediator of RNA polymerase II transcription subunit 14">
    <location>
        <begin position="1"/>
        <end position="1178"/>
    </location>
</feature>
<feature type="region of interest" description="Disordered" evidence="2">
    <location>
        <begin position="1"/>
        <end position="50"/>
    </location>
</feature>
<feature type="region of interest" description="Disordered" evidence="2">
    <location>
        <begin position="1064"/>
        <end position="1178"/>
    </location>
</feature>
<feature type="compositionally biased region" description="Polar residues" evidence="2">
    <location>
        <begin position="1"/>
        <end position="12"/>
    </location>
</feature>
<feature type="compositionally biased region" description="Low complexity" evidence="2">
    <location>
        <begin position="1074"/>
        <end position="1112"/>
    </location>
</feature>
<feature type="compositionally biased region" description="Low complexity" evidence="2">
    <location>
        <begin position="1119"/>
        <end position="1164"/>
    </location>
</feature>
<sequence>MDNSVHNNSNTTHPDKSRASIVNGVREERVSLSTEPPAGVKGGDNGPITVGDYNKLESRLQGAGMEDSVDELQHITDDVMPLSLLLSRLAQFSHLKLQELILDLASKPLPENTLNGNAKGSMNSSINGNVNAGVNGVPKLPSPALEDTSPESLNKKTMILKFIQDLHSRWVKALVITEWARNADEVGKLIDLRTHLAAKLELYNRAFWNMVNLKHEMAFAKVPSPDLKTALEVLSTGAVHWMPDFGYLPKPPLTTQETLHWLNEIEVVLHMRLQLHEYEQIPEPWKEYKIDNGRVTFTVPGEFEVDLTISDEDFDKQFWFLDYRTIFSPSPSKLSDGARGFIEARVNTILETEGLLGCYKYLHELTLTTKIGEFARQAVELSRTGLWTQTLRVERLNRALGIQYWSQSLHTQDSQSWILLGVHSGKSSDGADDPSSPSRLMLQWFRDGKEVKDADIPLDTDTISTEKLLMTVISRHIKYLLSSIYNSLSSKPRYAQKRGRLSLRISDPPHLDCALTMQTLGADHAVLGIGPWSGNFFFADRPPFGVGWANKINTLRNPVTEAPVVLEQLRWYHMTLHLRTLPKPADWKVLPKAPVPLDEVKRVVYSRASTTREPFHAIFLRNSRWTPQWFAMMSLSLGGDRWWTAEGHGIPGLRINIFTELSITPTDLLLPSSPLFSKLTQHATNIMDQIHDFRVLHQQHIQYTARKASPDGHRTTVVLSADMLPLQPDPDGTTQPTWAGRFIQLDYKGPAPITPSEYRESLADPKSVRRQPTRQKVMIEATVGVLHPTKFRLLRHRLDRDVLYDRRLGHFTLRFQPASGAGIIPLLRSRVQSLDRLVDIVDALHLRGKQISPKKITLREIVFSYGNGSPTMSLSNPRPKFGGNKQRSWEVRLNLAAEQGVDVILEAGNPHLRAIDYLRSAANSVHLKKLPAWFVFTLPLYEALEQLHDSWDAILAKDLGTCYVFHKSLDWLTIRFALSGAKNRLVQLDIRPRDRNGHINWHISRAKTDPNINNENDEFNKILKQRVWSISGNGFKGLGNSATAQWDHGIGPLLAVINEALQSLAGTPPPPQVPTQIQQPQQPSPHPQQAQVQEQRQQPQQQQQANPLQGAAVPGRFPHQLQQGQQLSYQQQARLQQQQRQQQQQQQQQQHMHNQNQAQQAQQRAAMNDINTPVVVLD</sequence>
<comment type="function">
    <text evidence="1">Component of the Mediator complex, a coactivator involved in the regulated transcription of nearly all RNA polymerase II-dependent genes. Mediator functions as a bridge to convey information from gene-specific regulatory proteins to the basal RNA polymerase II transcription machinery. Mediator is recruited to promoters by direct interactions with regulatory proteins and serves as a scaffold for the assembly of a functional preinitiation complex with RNA polymerase II and the general transcription factors (By similarity).</text>
</comment>
<comment type="subunit">
    <text evidence="1">Component of the Mediator complex.</text>
</comment>
<comment type="subcellular location">
    <subcellularLocation>
        <location evidence="3">Nucleus</location>
    </subcellularLocation>
</comment>
<comment type="similarity">
    <text evidence="3">Belongs to the Mediator complex subunit 14 family.</text>
</comment>
<protein>
    <recommendedName>
        <fullName>Mediator of RNA polymerase II transcription subunit 14</fullName>
    </recommendedName>
    <alternativeName>
        <fullName>Mediator complex subunit 14</fullName>
    </alternativeName>
</protein>